<comment type="function">
    <text evidence="1">Transfers a succinyl group from succinyl-CoA to L-homoserine, forming succinyl-L-homoserine.</text>
</comment>
<comment type="catalytic activity">
    <reaction evidence="1">
        <text>L-homoserine + succinyl-CoA = O-succinyl-L-homoserine + CoA</text>
        <dbReference type="Rhea" id="RHEA:22008"/>
        <dbReference type="ChEBI" id="CHEBI:57287"/>
        <dbReference type="ChEBI" id="CHEBI:57292"/>
        <dbReference type="ChEBI" id="CHEBI:57476"/>
        <dbReference type="ChEBI" id="CHEBI:57661"/>
        <dbReference type="EC" id="2.3.1.46"/>
    </reaction>
</comment>
<comment type="pathway">
    <text evidence="1">Amino-acid biosynthesis; L-methionine biosynthesis via de novo pathway; O-succinyl-L-homoserine from L-homoserine: step 1/1.</text>
</comment>
<comment type="subunit">
    <text evidence="1">Homodimer.</text>
</comment>
<comment type="subcellular location">
    <subcellularLocation>
        <location evidence="1">Cytoplasm</location>
    </subcellularLocation>
</comment>
<comment type="similarity">
    <text evidence="1">Belongs to the AB hydrolase superfamily. MetX family.</text>
</comment>
<feature type="chain" id="PRO_1000132721" description="Homoserine O-succinyltransferase">
    <location>
        <begin position="1"/>
        <end position="380"/>
    </location>
</feature>
<feature type="domain" description="AB hydrolase-1" evidence="1">
    <location>
        <begin position="49"/>
        <end position="357"/>
    </location>
</feature>
<feature type="active site" description="Nucleophile" evidence="1">
    <location>
        <position position="155"/>
    </location>
</feature>
<feature type="active site" evidence="1">
    <location>
        <position position="320"/>
    </location>
</feature>
<feature type="active site" evidence="1">
    <location>
        <position position="353"/>
    </location>
</feature>
<feature type="binding site" evidence="1">
    <location>
        <position position="225"/>
    </location>
    <ligand>
        <name>substrate</name>
    </ligand>
</feature>
<feature type="binding site" evidence="1">
    <location>
        <position position="354"/>
    </location>
    <ligand>
        <name>substrate</name>
    </ligand>
</feature>
<feature type="site" description="Important for acyl-CoA specificity" evidence="1">
    <location>
        <position position="322"/>
    </location>
</feature>
<name>METXS_LARHH</name>
<keyword id="KW-0012">Acyltransferase</keyword>
<keyword id="KW-0028">Amino-acid biosynthesis</keyword>
<keyword id="KW-0963">Cytoplasm</keyword>
<keyword id="KW-0486">Methionine biosynthesis</keyword>
<keyword id="KW-1185">Reference proteome</keyword>
<keyword id="KW-0808">Transferase</keyword>
<accession>C1D4Z8</accession>
<dbReference type="EC" id="2.3.1.46" evidence="1"/>
<dbReference type="EMBL" id="CP001154">
    <property type="protein sequence ID" value="ACO75939.1"/>
    <property type="molecule type" value="Genomic_DNA"/>
</dbReference>
<dbReference type="SMR" id="C1D4Z8"/>
<dbReference type="STRING" id="557598.LHK_02961"/>
<dbReference type="ESTHER" id="larhh-metx">
    <property type="family name" value="Homoserine_transacetylase"/>
</dbReference>
<dbReference type="KEGG" id="lhk:LHK_02961"/>
<dbReference type="eggNOG" id="COG2021">
    <property type="taxonomic scope" value="Bacteria"/>
</dbReference>
<dbReference type="HOGENOM" id="CLU_028760_1_2_4"/>
<dbReference type="UniPathway" id="UPA00051">
    <property type="reaction ID" value="UER00075"/>
</dbReference>
<dbReference type="Proteomes" id="UP000002010">
    <property type="component" value="Chromosome"/>
</dbReference>
<dbReference type="GO" id="GO:0005737">
    <property type="term" value="C:cytoplasm"/>
    <property type="evidence" value="ECO:0007669"/>
    <property type="project" value="UniProtKB-SubCell"/>
</dbReference>
<dbReference type="GO" id="GO:0004414">
    <property type="term" value="F:homoserine O-acetyltransferase activity"/>
    <property type="evidence" value="ECO:0007669"/>
    <property type="project" value="TreeGrafter"/>
</dbReference>
<dbReference type="GO" id="GO:0008899">
    <property type="term" value="F:homoserine O-succinyltransferase activity"/>
    <property type="evidence" value="ECO:0007669"/>
    <property type="project" value="UniProtKB-UniRule"/>
</dbReference>
<dbReference type="GO" id="GO:0009092">
    <property type="term" value="P:homoserine metabolic process"/>
    <property type="evidence" value="ECO:0007669"/>
    <property type="project" value="TreeGrafter"/>
</dbReference>
<dbReference type="GO" id="GO:0009086">
    <property type="term" value="P:methionine biosynthetic process"/>
    <property type="evidence" value="ECO:0007669"/>
    <property type="project" value="UniProtKB-UniRule"/>
</dbReference>
<dbReference type="FunFam" id="1.10.1740.110:FF:000001">
    <property type="entry name" value="Homoserine O-acetyltransferase"/>
    <property type="match status" value="1"/>
</dbReference>
<dbReference type="Gene3D" id="1.10.1740.110">
    <property type="match status" value="1"/>
</dbReference>
<dbReference type="Gene3D" id="3.40.50.1820">
    <property type="entry name" value="alpha/beta hydrolase"/>
    <property type="match status" value="1"/>
</dbReference>
<dbReference type="HAMAP" id="MF_00296">
    <property type="entry name" value="MetX_acyltransf"/>
    <property type="match status" value="1"/>
</dbReference>
<dbReference type="InterPro" id="IPR000073">
    <property type="entry name" value="AB_hydrolase_1"/>
</dbReference>
<dbReference type="InterPro" id="IPR029058">
    <property type="entry name" value="AB_hydrolase_fold"/>
</dbReference>
<dbReference type="InterPro" id="IPR008220">
    <property type="entry name" value="HAT_MetX-like"/>
</dbReference>
<dbReference type="NCBIfam" id="TIGR01392">
    <property type="entry name" value="homoserO_Ac_trn"/>
    <property type="match status" value="1"/>
</dbReference>
<dbReference type="NCBIfam" id="NF001209">
    <property type="entry name" value="PRK00175.1"/>
    <property type="match status" value="1"/>
</dbReference>
<dbReference type="PANTHER" id="PTHR32268">
    <property type="entry name" value="HOMOSERINE O-ACETYLTRANSFERASE"/>
    <property type="match status" value="1"/>
</dbReference>
<dbReference type="PANTHER" id="PTHR32268:SF11">
    <property type="entry name" value="HOMOSERINE O-ACETYLTRANSFERASE"/>
    <property type="match status" value="1"/>
</dbReference>
<dbReference type="Pfam" id="PF00561">
    <property type="entry name" value="Abhydrolase_1"/>
    <property type="match status" value="1"/>
</dbReference>
<dbReference type="PIRSF" id="PIRSF000443">
    <property type="entry name" value="Homoser_Ac_trans"/>
    <property type="match status" value="1"/>
</dbReference>
<dbReference type="SUPFAM" id="SSF53474">
    <property type="entry name" value="alpha/beta-Hydrolases"/>
    <property type="match status" value="1"/>
</dbReference>
<evidence type="ECO:0000255" key="1">
    <source>
        <dbReference type="HAMAP-Rule" id="MF_00296"/>
    </source>
</evidence>
<proteinExistence type="inferred from homology"/>
<organism>
    <name type="scientific">Laribacter hongkongensis (strain HLHK9)</name>
    <dbReference type="NCBI Taxonomy" id="557598"/>
    <lineage>
        <taxon>Bacteria</taxon>
        <taxon>Pseudomonadati</taxon>
        <taxon>Pseudomonadota</taxon>
        <taxon>Betaproteobacteria</taxon>
        <taxon>Neisseriales</taxon>
        <taxon>Aquaspirillaceae</taxon>
        <taxon>Laribacter</taxon>
    </lineage>
</organism>
<protein>
    <recommendedName>
        <fullName evidence="1">Homoserine O-succinyltransferase</fullName>
        <shortName evidence="1">HST</shortName>
        <ecNumber evidence="1">2.3.1.46</ecNumber>
    </recommendedName>
    <alternativeName>
        <fullName evidence="1">Homoserine transsuccinylase</fullName>
        <shortName evidence="1">HTS</shortName>
    </alternativeName>
</protein>
<sequence length="380" mass="41576">MTFASDSVGLVEARRADFDTPLALASGTVLDRYSLCYETYGELNPEANNAILICHALSGHHHVAGRYCEDDKQAGWWDNMVGPGKPIDTARFFVVGVNNLGGCHGSTGPSSVNPATGRPWGSAFPLVTVPDWVESQARLADLLGIRRWAAVIGGSLGGMQALEWSMRFPERVANALVIASAPKLSAQNIAFNDVARQAILTDPEFHGGDFYAHGVVPRRGLRLARMLGHITYLSDDGMGAKFGRLLRSGDYQYGFDVEFEIESYLRYQGDKFSGLFDANTYLLMTKALDYFDPAKAFDGDLVAALARVRANFLIAAFTSDWRFAPDRSREIVKALVAAGKRVSYGEIESTHGHDAFLMTDSPYVALMRAYLNRVAEELAA</sequence>
<reference key="1">
    <citation type="journal article" date="2009" name="PLoS Genet.">
        <title>The complete genome and proteome of Laribacter hongkongensis reveal potential mechanisms for adaptations to different temperatures and habitats.</title>
        <authorList>
            <person name="Woo P.C.Y."/>
            <person name="Lau S.K.P."/>
            <person name="Tse H."/>
            <person name="Teng J.L.L."/>
            <person name="Curreem S.O."/>
            <person name="Tsang A.K.L."/>
            <person name="Fan R.Y.Y."/>
            <person name="Wong G.K.M."/>
            <person name="Huang Y."/>
            <person name="Loman N.J."/>
            <person name="Snyder L.A.S."/>
            <person name="Cai J.J."/>
            <person name="Huang J.-D."/>
            <person name="Mak W."/>
            <person name="Pallen M.J."/>
            <person name="Lok S."/>
            <person name="Yuen K.-Y."/>
        </authorList>
    </citation>
    <scope>NUCLEOTIDE SEQUENCE [LARGE SCALE GENOMIC DNA]</scope>
    <source>
        <strain>HLHK9</strain>
    </source>
</reference>
<gene>
    <name evidence="1" type="primary">metXS</name>
    <name type="ordered locus">LHK_02961</name>
</gene>